<gene>
    <name type="primary">atpI</name>
    <name type="ordered locus">BB_0091</name>
</gene>
<reference key="1">
    <citation type="journal article" date="1997" name="Nature">
        <title>Genomic sequence of a Lyme disease spirochaete, Borrelia burgdorferi.</title>
        <authorList>
            <person name="Fraser C.M."/>
            <person name="Casjens S."/>
            <person name="Huang W.M."/>
            <person name="Sutton G.G."/>
            <person name="Clayton R.A."/>
            <person name="Lathigra R."/>
            <person name="White O."/>
            <person name="Ketchum K.A."/>
            <person name="Dodson R.J."/>
            <person name="Hickey E.K."/>
            <person name="Gwinn M.L."/>
            <person name="Dougherty B.A."/>
            <person name="Tomb J.-F."/>
            <person name="Fleischmann R.D."/>
            <person name="Richardson D.L."/>
            <person name="Peterson J.D."/>
            <person name="Kerlavage A.R."/>
            <person name="Quackenbush J."/>
            <person name="Salzberg S.L."/>
            <person name="Hanson M."/>
            <person name="van Vugt R."/>
            <person name="Palmer N."/>
            <person name="Adams M.D."/>
            <person name="Gocayne J.D."/>
            <person name="Weidman J.F."/>
            <person name="Utterback T.R."/>
            <person name="Watthey L."/>
            <person name="McDonald L.A."/>
            <person name="Artiach P."/>
            <person name="Bowman C."/>
            <person name="Garland S.A."/>
            <person name="Fujii C."/>
            <person name="Cotton M.D."/>
            <person name="Horst K."/>
            <person name="Roberts K.M."/>
            <person name="Hatch B."/>
            <person name="Smith H.O."/>
            <person name="Venter J.C."/>
        </authorList>
    </citation>
    <scope>NUCLEOTIDE SEQUENCE [LARGE SCALE GENOMIC DNA]</scope>
    <source>
        <strain>ATCC 35210 / DSM 4680 / CIP 102532 / B31</strain>
    </source>
</reference>
<proteinExistence type="inferred from homology"/>
<accession>O51118</accession>
<keyword id="KW-1003">Cell membrane</keyword>
<keyword id="KW-0375">Hydrogen ion transport</keyword>
<keyword id="KW-0406">Ion transport</keyword>
<keyword id="KW-0472">Membrane</keyword>
<keyword id="KW-1185">Reference proteome</keyword>
<keyword id="KW-0812">Transmembrane</keyword>
<keyword id="KW-1133">Transmembrane helix</keyword>
<keyword id="KW-0813">Transport</keyword>
<sequence length="608" mass="69123">MIVKMKKVLLLTLSKYKKESLEILRDFGAVHINSCNKNSDSLKKSIDDRRILMQAFSLLKEDGGVKALKSSNGNFLDIAKSIVNLGNEIKEFQDIKRSLLHERNLISVWGNFSLENIDELKESNIYIQFFKIQKSEYKNLLRDPNVNVLLIKNVKNTSYFVSVGEFEQKIEIADEFKFNFDLDYINNKLKVVDEILDQKLTQISLFNKYIDILRDEIKNYDQIVEFEQVLADMQTDXEDFSYITGFVPAESQESLKNAVLKAGFAAQFADPEENDIIPTYIKRKGIANLAAPIFNILETIPGYKERDISFIFMLFFFVFFGMIIGDAAYGVIFFLIGILLSLSFLLKGKPLTPFHGLIFYLSVSSILYGAMTGTWFGSPLILEMFPILNSFKVSYLTEKNSVQNIIFICFSIGVLQISLAHVWNFFRQVKEKPHIHSIAQIGWLMCIVGLYYLVLNLILSQSRFPMYNVVYNVIYFGVALVFVFGKQDGSNFFKCILKSFGGIIEQFLTTVSGFADIISYIRLFAVGLAGLSISASFNTMSIPLLKSSNIGLIVAGIIVILFGHVLNIMLSLLSVIVHGVRLNMLEFSNHLGQEWSGCAYRPFKKMKK</sequence>
<feature type="chain" id="PRO_0000119237" description="V-type ATP synthase subunit I">
    <location>
        <begin position="1"/>
        <end position="608"/>
    </location>
</feature>
<feature type="transmembrane region" description="Helical" evidence="1">
    <location>
        <begin position="308"/>
        <end position="325"/>
    </location>
</feature>
<feature type="transmembrane region" description="Helical" evidence="1">
    <location>
        <begin position="327"/>
        <end position="346"/>
    </location>
</feature>
<feature type="transmembrane region" description="Helical" evidence="1">
    <location>
        <begin position="356"/>
        <end position="376"/>
    </location>
</feature>
<feature type="transmembrane region" description="Helical" evidence="1">
    <location>
        <begin position="405"/>
        <end position="425"/>
    </location>
</feature>
<feature type="transmembrane region" description="Helical" evidence="1">
    <location>
        <begin position="438"/>
        <end position="458"/>
    </location>
</feature>
<feature type="transmembrane region" description="Helical" evidence="1">
    <location>
        <begin position="464"/>
        <end position="484"/>
    </location>
</feature>
<feature type="transmembrane region" description="Helical" evidence="1">
    <location>
        <begin position="495"/>
        <end position="515"/>
    </location>
</feature>
<feature type="transmembrane region" description="Helical" evidence="1">
    <location>
        <begin position="517"/>
        <end position="537"/>
    </location>
</feature>
<feature type="transmembrane region" description="Helical" evidence="1">
    <location>
        <begin position="550"/>
        <end position="570"/>
    </location>
</feature>
<comment type="function">
    <text>Produces ATP from ADP in the presence of a proton gradient across the membrane.</text>
</comment>
<comment type="subcellular location">
    <subcellularLocation>
        <location evidence="2">Cell membrane</location>
        <topology evidence="2">Multi-pass membrane protein</topology>
    </subcellularLocation>
</comment>
<comment type="similarity">
    <text evidence="2">Belongs to the V-ATPase 116 kDa subunit family.</text>
</comment>
<dbReference type="EMBL" id="AE000783">
    <property type="status" value="NOT_ANNOTATED_CDS"/>
    <property type="molecule type" value="Genomic_DNA"/>
</dbReference>
<dbReference type="PIR" id="C70111">
    <property type="entry name" value="C70111"/>
</dbReference>
<dbReference type="RefSeq" id="WP_023003276.1">
    <property type="nucleotide sequence ID" value="NC_001318.1"/>
</dbReference>
<dbReference type="RefSeq" id="YP_008686559.1">
    <property type="nucleotide sequence ID" value="NC_001318.1"/>
</dbReference>
<dbReference type="PATRIC" id="fig|224326.49.peg.489"/>
<dbReference type="OrthoDB" id="9803814at2"/>
<dbReference type="Proteomes" id="UP000001807">
    <property type="component" value="Chromosome"/>
</dbReference>
<dbReference type="GO" id="GO:0005886">
    <property type="term" value="C:plasma membrane"/>
    <property type="evidence" value="ECO:0007669"/>
    <property type="project" value="UniProtKB-SubCell"/>
</dbReference>
<dbReference type="GO" id="GO:0033179">
    <property type="term" value="C:proton-transporting V-type ATPase, V0 domain"/>
    <property type="evidence" value="ECO:0007669"/>
    <property type="project" value="InterPro"/>
</dbReference>
<dbReference type="GO" id="GO:0016471">
    <property type="term" value="C:vacuolar proton-transporting V-type ATPase complex"/>
    <property type="evidence" value="ECO:0007669"/>
    <property type="project" value="TreeGrafter"/>
</dbReference>
<dbReference type="GO" id="GO:0051117">
    <property type="term" value="F:ATPase binding"/>
    <property type="evidence" value="ECO:0007669"/>
    <property type="project" value="TreeGrafter"/>
</dbReference>
<dbReference type="GO" id="GO:0046961">
    <property type="term" value="F:proton-transporting ATPase activity, rotational mechanism"/>
    <property type="evidence" value="ECO:0007669"/>
    <property type="project" value="InterPro"/>
</dbReference>
<dbReference type="GO" id="GO:0007035">
    <property type="term" value="P:vacuolar acidification"/>
    <property type="evidence" value="ECO:0007669"/>
    <property type="project" value="TreeGrafter"/>
</dbReference>
<dbReference type="InterPro" id="IPR002490">
    <property type="entry name" value="V-ATPase_116kDa_su"/>
</dbReference>
<dbReference type="NCBIfam" id="NF004429">
    <property type="entry name" value="PRK05771.2-2"/>
    <property type="match status" value="1"/>
</dbReference>
<dbReference type="PANTHER" id="PTHR11629:SF63">
    <property type="entry name" value="V-TYPE PROTON ATPASE SUBUNIT A"/>
    <property type="match status" value="1"/>
</dbReference>
<dbReference type="PANTHER" id="PTHR11629">
    <property type="entry name" value="VACUOLAR PROTON ATPASES"/>
    <property type="match status" value="1"/>
</dbReference>
<name>VATI_BORBU</name>
<organism>
    <name type="scientific">Borreliella burgdorferi (strain ATCC 35210 / DSM 4680 / CIP 102532 / B31)</name>
    <name type="common">Borrelia burgdorferi</name>
    <dbReference type="NCBI Taxonomy" id="224326"/>
    <lineage>
        <taxon>Bacteria</taxon>
        <taxon>Pseudomonadati</taxon>
        <taxon>Spirochaetota</taxon>
        <taxon>Spirochaetia</taxon>
        <taxon>Spirochaetales</taxon>
        <taxon>Borreliaceae</taxon>
        <taxon>Borreliella</taxon>
    </lineage>
</organism>
<protein>
    <recommendedName>
        <fullName>V-type ATP synthase subunit I</fullName>
    </recommendedName>
    <alternativeName>
        <fullName>V-ATPase subunit I</fullName>
    </alternativeName>
</protein>
<evidence type="ECO:0000255" key="1"/>
<evidence type="ECO:0000305" key="2"/>